<sequence>MADEDLIFRLEGVDGGQSPRAGHDGDSDGDSDDEEGYFICPITDDPSSNQNVNSKVNKYYSNLTKSERYSSSGSPANSFHFKEAWKHAIQKAKHMPDPWAEFHLEDIATERATRHRYNAVTGEWLDDEVLIKMASQPFGRGAMRECFRTKKLSNFLHAQQWKGASNYVAKRYIEPVDRDVYFEDVRLQMEAKLWGEEYNRHKPPKQVDIMQMCIIELKDRPGKPLFHLEHYIEGKYIKYNSNSGFVRDDNIRLTPQAFSHFTFERSGHQLIVVDIQGVGDLYTDPQIHTETGTDFGDGNLGVRGMALFFYSHACNRICESMGLAPFDLSPRERDAVNQNTKLLQSAKTILRGTEEKCGSPQVRTLSGSRPPLLRPLSENSGDENMSDVTFDSLPSSPSSATPHSQKLDHLHWPVFSDLDNMASRDHDHLDNHRESENSGDSGYPSEKRGELDDPEPREHGHSYSNRKYESDEDSLGSSGRVCVEKWNLLNSSRLHLPRASAVALEVQRLNALDLEKKIGKSILGKVHLAMVRYHEGGRFCEKGEEWDQESAVFHLEHAANLGELEAIVGLGLMYSQLPHHILADVSLKETEENKTKGFDYLLKAAEAGDRQSMILVARAFDSGQNLSPDRCQDWLEALHWYNTALEMTDCDEGGEYDGMQDEPRYMMLAREAEMLFTGGYGLEKDPQRSGDLYTQAAEAAMEAMKGRLANQYYQKAEEAWAQMEE</sequence>
<proteinExistence type="evidence at protein level"/>
<keyword id="KW-0002">3D-structure</keyword>
<keyword id="KW-0007">Acetylation</keyword>
<keyword id="KW-0067">ATP-binding</keyword>
<keyword id="KW-0106">Calcium</keyword>
<keyword id="KW-0112">Calmodulin-binding</keyword>
<keyword id="KW-0418">Kinase</keyword>
<keyword id="KW-0547">Nucleotide-binding</keyword>
<keyword id="KW-0597">Phosphoprotein</keyword>
<keyword id="KW-1267">Proteomics identification</keyword>
<keyword id="KW-1185">Reference proteome</keyword>
<keyword id="KW-0723">Serine/threonine-protein kinase</keyword>
<keyword id="KW-0808">Transferase</keyword>
<protein>
    <recommendedName>
        <fullName>Eukaryotic elongation factor 2 kinase</fullName>
        <shortName>eEF-2 kinase</shortName>
        <shortName>eEF-2K</shortName>
        <ecNumber evidence="6 15">2.7.11.20</ecNumber>
    </recommendedName>
    <alternativeName>
        <fullName>Calcium/calmodulin-dependent eukaryotic elongation factor 2 kinase</fullName>
    </alternativeName>
</protein>
<evidence type="ECO:0000250" key="1"/>
<evidence type="ECO:0000250" key="2">
    <source>
        <dbReference type="UniProtKB" id="O08796"/>
    </source>
</evidence>
<evidence type="ECO:0000250" key="3">
    <source>
        <dbReference type="UniProtKB" id="P70531"/>
    </source>
</evidence>
<evidence type="ECO:0000255" key="4">
    <source>
        <dbReference type="PROSITE-ProRule" id="PRU00501"/>
    </source>
</evidence>
<evidence type="ECO:0000256" key="5">
    <source>
        <dbReference type="SAM" id="MobiDB-lite"/>
    </source>
</evidence>
<evidence type="ECO:0000269" key="6">
    <source>
    </source>
</evidence>
<evidence type="ECO:0000269" key="7">
    <source>
    </source>
</evidence>
<evidence type="ECO:0000269" key="8">
    <source>
    </source>
</evidence>
<evidence type="ECO:0000269" key="9">
    <source>
    </source>
</evidence>
<evidence type="ECO:0000269" key="10">
    <source>
    </source>
</evidence>
<evidence type="ECO:0000269" key="11">
    <source>
    </source>
</evidence>
<evidence type="ECO:0000269" key="12">
    <source>
    </source>
</evidence>
<evidence type="ECO:0000269" key="13">
    <source>
    </source>
</evidence>
<evidence type="ECO:0000269" key="14">
    <source>
    </source>
</evidence>
<evidence type="ECO:0000269" key="15">
    <source>
    </source>
</evidence>
<evidence type="ECO:0000305" key="16"/>
<evidence type="ECO:0007744" key="17">
    <source>
    </source>
</evidence>
<evidence type="ECO:0007744" key="18">
    <source>
    </source>
</evidence>
<evidence type="ECO:0007744" key="19">
    <source>
    </source>
</evidence>
<evidence type="ECO:0007744" key="20">
    <source>
    </source>
</evidence>
<evidence type="ECO:0007744" key="21">
    <source>
    </source>
</evidence>
<evidence type="ECO:0007744" key="22">
    <source>
    </source>
</evidence>
<evidence type="ECO:0007744" key="23">
    <source>
    </source>
</evidence>
<evidence type="ECO:0007744" key="24">
    <source>
    </source>
</evidence>
<evidence type="ECO:0007744" key="25">
    <source>
    </source>
</evidence>
<evidence type="ECO:0007744" key="26">
    <source>
    </source>
</evidence>
<evidence type="ECO:0007829" key="27">
    <source>
        <dbReference type="PDB" id="5J8H"/>
    </source>
</evidence>
<evidence type="ECO:0007829" key="28">
    <source>
        <dbReference type="PDB" id="6NX4"/>
    </source>
</evidence>
<evidence type="ECO:0007829" key="29">
    <source>
        <dbReference type="PDB" id="7SHQ"/>
    </source>
</evidence>
<evidence type="ECO:0007829" key="30">
    <source>
        <dbReference type="PDB" id="8FNY"/>
    </source>
</evidence>
<evidence type="ECO:0007829" key="31">
    <source>
        <dbReference type="PDB" id="8FO6"/>
    </source>
</evidence>
<evidence type="ECO:0007829" key="32">
    <source>
        <dbReference type="PDB" id="8GM4"/>
    </source>
</evidence>
<evidence type="ECO:0007829" key="33">
    <source>
        <dbReference type="PDB" id="8GM5"/>
    </source>
</evidence>
<dbReference type="EC" id="2.7.11.20" evidence="6 15"/>
<dbReference type="EMBL" id="U93850">
    <property type="protein sequence ID" value="AAB58270.1"/>
    <property type="molecule type" value="mRNA"/>
</dbReference>
<dbReference type="EMBL" id="AC009034">
    <property type="status" value="NOT_ANNOTATED_CDS"/>
    <property type="molecule type" value="Genomic_DNA"/>
</dbReference>
<dbReference type="EMBL" id="BC032665">
    <property type="protein sequence ID" value="AAH32665.1"/>
    <property type="molecule type" value="mRNA"/>
</dbReference>
<dbReference type="CCDS" id="CCDS10604.1"/>
<dbReference type="RefSeq" id="NP_037434.2">
    <property type="nucleotide sequence ID" value="NM_013302.5"/>
</dbReference>
<dbReference type="RefSeq" id="XP_005276554.1">
    <property type="nucleotide sequence ID" value="XM_005276497.3"/>
</dbReference>
<dbReference type="RefSeq" id="XP_016878682.1">
    <property type="nucleotide sequence ID" value="XM_017023193.1"/>
</dbReference>
<dbReference type="PDB" id="5J8H">
    <property type="method" value="NMR"/>
    <property type="chains" value="B=74-100"/>
</dbReference>
<dbReference type="PDB" id="5KS5">
    <property type="method" value="NMR"/>
    <property type="chains" value="A=627-725"/>
</dbReference>
<dbReference type="PDB" id="6NX4">
    <property type="method" value="NMR"/>
    <property type="chains" value="A=562-725"/>
</dbReference>
<dbReference type="PDB" id="7SHQ">
    <property type="method" value="X-ray"/>
    <property type="resolution" value="2.34 A"/>
    <property type="chains" value="A=70-358, A=490-725"/>
</dbReference>
<dbReference type="PDB" id="8FNY">
    <property type="method" value="X-ray"/>
    <property type="resolution" value="2.22 A"/>
    <property type="chains" value="A/C=70-358, A/C=490-725"/>
</dbReference>
<dbReference type="PDB" id="8FO6">
    <property type="method" value="X-ray"/>
    <property type="resolution" value="2.55 A"/>
    <property type="chains" value="A=70-358, A=490-725"/>
</dbReference>
<dbReference type="PDB" id="8GM4">
    <property type="method" value="X-ray"/>
    <property type="resolution" value="2.12 A"/>
    <property type="chains" value="A=70-358, A=490-725"/>
</dbReference>
<dbReference type="PDB" id="8GM5">
    <property type="method" value="X-ray"/>
    <property type="resolution" value="2.12 A"/>
    <property type="chains" value="A=70-358, A=490-725"/>
</dbReference>
<dbReference type="PDBsum" id="5J8H"/>
<dbReference type="PDBsum" id="5KS5"/>
<dbReference type="PDBsum" id="6NX4"/>
<dbReference type="PDBsum" id="7SHQ"/>
<dbReference type="PDBsum" id="8FNY"/>
<dbReference type="PDBsum" id="8FO6"/>
<dbReference type="PDBsum" id="8GM4"/>
<dbReference type="PDBsum" id="8GM5"/>
<dbReference type="SMR" id="O00418"/>
<dbReference type="BioGRID" id="118953">
    <property type="interactions" value="62"/>
</dbReference>
<dbReference type="BioGRID" id="3193665">
    <property type="interactions" value="1"/>
</dbReference>
<dbReference type="ELM" id="O00418"/>
<dbReference type="FunCoup" id="O00418">
    <property type="interactions" value="1312"/>
</dbReference>
<dbReference type="IntAct" id="O00418">
    <property type="interactions" value="24"/>
</dbReference>
<dbReference type="MINT" id="O00418"/>
<dbReference type="STRING" id="9606.ENSP00000263026"/>
<dbReference type="BindingDB" id="O00418"/>
<dbReference type="ChEMBL" id="CHEMBL5026"/>
<dbReference type="DrugBank" id="DB01259">
    <property type="generic name" value="Lapatinib"/>
</dbReference>
<dbReference type="GuidetoPHARMACOLOGY" id="2014"/>
<dbReference type="GlyGen" id="O00418">
    <property type="glycosylation" value="1 site, 1 O-linked glycan (1 site)"/>
</dbReference>
<dbReference type="iPTMnet" id="O00418"/>
<dbReference type="MetOSite" id="O00418"/>
<dbReference type="PhosphoSitePlus" id="O00418"/>
<dbReference type="BioMuta" id="EEF2K"/>
<dbReference type="jPOST" id="O00418"/>
<dbReference type="MassIVE" id="O00418"/>
<dbReference type="PaxDb" id="9606-ENSP00000263026"/>
<dbReference type="PeptideAtlas" id="O00418"/>
<dbReference type="ProteomicsDB" id="47876"/>
<dbReference type="Pumba" id="O00418"/>
<dbReference type="Antibodypedia" id="25835">
    <property type="antibodies" value="475 antibodies from 35 providers"/>
</dbReference>
<dbReference type="DNASU" id="29904"/>
<dbReference type="Ensembl" id="ENST00000263026.10">
    <property type="protein sequence ID" value="ENSP00000263026.5"/>
    <property type="gene ID" value="ENSG00000103319.12"/>
</dbReference>
<dbReference type="GeneID" id="29904"/>
<dbReference type="KEGG" id="hsa:29904"/>
<dbReference type="MANE-Select" id="ENST00000263026.10">
    <property type="protein sequence ID" value="ENSP00000263026.5"/>
    <property type="RefSeq nucleotide sequence ID" value="NM_013302.5"/>
    <property type="RefSeq protein sequence ID" value="NP_037434.2"/>
</dbReference>
<dbReference type="UCSC" id="uc002dki.4">
    <property type="organism name" value="human"/>
</dbReference>
<dbReference type="AGR" id="HGNC:24615"/>
<dbReference type="CTD" id="29904"/>
<dbReference type="DisGeNET" id="29904"/>
<dbReference type="GeneCards" id="EEF2K"/>
<dbReference type="HGNC" id="HGNC:24615">
    <property type="gene designation" value="EEF2K"/>
</dbReference>
<dbReference type="HPA" id="ENSG00000103319">
    <property type="expression patterns" value="Tissue enhanced (skin)"/>
</dbReference>
<dbReference type="MIM" id="606968">
    <property type="type" value="gene"/>
</dbReference>
<dbReference type="neXtProt" id="NX_O00418"/>
<dbReference type="OpenTargets" id="ENSG00000103319"/>
<dbReference type="PharmGKB" id="PA134992891"/>
<dbReference type="VEuPathDB" id="HostDB:ENSG00000103319"/>
<dbReference type="eggNOG" id="ENOG502QVA3">
    <property type="taxonomic scope" value="Eukaryota"/>
</dbReference>
<dbReference type="GeneTree" id="ENSGT00940000157839"/>
<dbReference type="HOGENOM" id="CLU_382143_0_0_1"/>
<dbReference type="InParanoid" id="O00418"/>
<dbReference type="OMA" id="CLQMEAK"/>
<dbReference type="OrthoDB" id="301415at2759"/>
<dbReference type="PAN-GO" id="O00418">
    <property type="GO annotations" value="1 GO annotation based on evolutionary models"/>
</dbReference>
<dbReference type="PhylomeDB" id="O00418"/>
<dbReference type="TreeFam" id="TF316085"/>
<dbReference type="BRENDA" id="2.7.11.20">
    <property type="organism ID" value="2681"/>
</dbReference>
<dbReference type="PathwayCommons" id="O00418"/>
<dbReference type="Reactome" id="R-HSA-166208">
    <property type="pathway name" value="mTORC1-mediated signalling"/>
</dbReference>
<dbReference type="SignaLink" id="O00418"/>
<dbReference type="SIGNOR" id="O00418"/>
<dbReference type="BioGRID-ORCS" id="29904">
    <property type="hits" value="10 hits in 1191 CRISPR screens"/>
</dbReference>
<dbReference type="ChiTaRS" id="EEF2K">
    <property type="organism name" value="human"/>
</dbReference>
<dbReference type="GeneWiki" id="EEF2K"/>
<dbReference type="Pharos" id="O00418">
    <property type="development level" value="Tchem"/>
</dbReference>
<dbReference type="PRO" id="PR:O00418"/>
<dbReference type="Proteomes" id="UP000005640">
    <property type="component" value="Chromosome 16"/>
</dbReference>
<dbReference type="RNAct" id="O00418">
    <property type="molecule type" value="protein"/>
</dbReference>
<dbReference type="Bgee" id="ENSG00000103319">
    <property type="expression patterns" value="Expressed in skin of leg and 103 other cell types or tissues"/>
</dbReference>
<dbReference type="ExpressionAtlas" id="O00418">
    <property type="expression patterns" value="baseline and differential"/>
</dbReference>
<dbReference type="GO" id="GO:0005737">
    <property type="term" value="C:cytoplasm"/>
    <property type="evidence" value="ECO:0000304"/>
    <property type="project" value="ProtInc"/>
</dbReference>
<dbReference type="GO" id="GO:0005829">
    <property type="term" value="C:cytosol"/>
    <property type="evidence" value="ECO:0000304"/>
    <property type="project" value="Reactome"/>
</dbReference>
<dbReference type="GO" id="GO:0043197">
    <property type="term" value="C:dendritic spine"/>
    <property type="evidence" value="ECO:0007669"/>
    <property type="project" value="Ensembl"/>
</dbReference>
<dbReference type="GO" id="GO:0098978">
    <property type="term" value="C:glutamatergic synapse"/>
    <property type="evidence" value="ECO:0007669"/>
    <property type="project" value="Ensembl"/>
</dbReference>
<dbReference type="GO" id="GO:0014069">
    <property type="term" value="C:postsynaptic density"/>
    <property type="evidence" value="ECO:0007669"/>
    <property type="project" value="Ensembl"/>
</dbReference>
<dbReference type="GO" id="GO:0005524">
    <property type="term" value="F:ATP binding"/>
    <property type="evidence" value="ECO:0007669"/>
    <property type="project" value="UniProtKB-KW"/>
</dbReference>
<dbReference type="GO" id="GO:0005509">
    <property type="term" value="F:calcium ion binding"/>
    <property type="evidence" value="ECO:0007669"/>
    <property type="project" value="InterPro"/>
</dbReference>
<dbReference type="GO" id="GO:0005516">
    <property type="term" value="F:calmodulin binding"/>
    <property type="evidence" value="ECO:0000314"/>
    <property type="project" value="UniProtKB"/>
</dbReference>
<dbReference type="GO" id="GO:0004686">
    <property type="term" value="F:elongation factor-2 kinase activity"/>
    <property type="evidence" value="ECO:0000314"/>
    <property type="project" value="UniProtKB"/>
</dbReference>
<dbReference type="GO" id="GO:0004672">
    <property type="term" value="F:protein kinase activity"/>
    <property type="evidence" value="ECO:0000304"/>
    <property type="project" value="ProtInc"/>
</dbReference>
<dbReference type="GO" id="GO:0008135">
    <property type="term" value="F:translation factor activity, RNA binding"/>
    <property type="evidence" value="ECO:0000304"/>
    <property type="project" value="ProtInc"/>
</dbReference>
<dbReference type="GO" id="GO:0071454">
    <property type="term" value="P:cellular response to anoxia"/>
    <property type="evidence" value="ECO:0007669"/>
    <property type="project" value="Ensembl"/>
</dbReference>
<dbReference type="GO" id="GO:1990416">
    <property type="term" value="P:cellular response to brain-derived neurotrophic factor stimulus"/>
    <property type="evidence" value="ECO:0007669"/>
    <property type="project" value="Ensembl"/>
</dbReference>
<dbReference type="GO" id="GO:0071277">
    <property type="term" value="P:cellular response to calcium ion"/>
    <property type="evidence" value="ECO:0007669"/>
    <property type="project" value="Ensembl"/>
</dbReference>
<dbReference type="GO" id="GO:0071320">
    <property type="term" value="P:cellular response to cAMP"/>
    <property type="evidence" value="ECO:0007669"/>
    <property type="project" value="Ensembl"/>
</dbReference>
<dbReference type="GO" id="GO:0032869">
    <property type="term" value="P:cellular response to insulin stimulus"/>
    <property type="evidence" value="ECO:0007669"/>
    <property type="project" value="Ensembl"/>
</dbReference>
<dbReference type="GO" id="GO:0031037">
    <property type="term" value="P:myosin II filament disassembly"/>
    <property type="evidence" value="ECO:0000318"/>
    <property type="project" value="GO_Central"/>
</dbReference>
<dbReference type="GO" id="GO:0043066">
    <property type="term" value="P:negative regulation of apoptotic process"/>
    <property type="evidence" value="ECO:0007669"/>
    <property type="project" value="Ensembl"/>
</dbReference>
<dbReference type="GO" id="GO:0061003">
    <property type="term" value="P:positive regulation of dendritic spine morphogenesis"/>
    <property type="evidence" value="ECO:0007669"/>
    <property type="project" value="Ensembl"/>
</dbReference>
<dbReference type="GO" id="GO:0045807">
    <property type="term" value="P:positive regulation of endocytosis"/>
    <property type="evidence" value="ECO:0007669"/>
    <property type="project" value="Ensembl"/>
</dbReference>
<dbReference type="GO" id="GO:0051965">
    <property type="term" value="P:positive regulation of synapse assembly"/>
    <property type="evidence" value="ECO:0007669"/>
    <property type="project" value="Ensembl"/>
</dbReference>
<dbReference type="GO" id="GO:0046777">
    <property type="term" value="P:protein autophosphorylation"/>
    <property type="evidence" value="ECO:0000314"/>
    <property type="project" value="UniProtKB"/>
</dbReference>
<dbReference type="GO" id="GO:0140245">
    <property type="term" value="P:regulation of translation at postsynapse"/>
    <property type="evidence" value="ECO:0007669"/>
    <property type="project" value="Ensembl"/>
</dbReference>
<dbReference type="GO" id="GO:0002931">
    <property type="term" value="P:response to ischemia"/>
    <property type="evidence" value="ECO:0007669"/>
    <property type="project" value="Ensembl"/>
</dbReference>
<dbReference type="GO" id="GO:1990637">
    <property type="term" value="P:response to prolactin"/>
    <property type="evidence" value="ECO:0007669"/>
    <property type="project" value="Ensembl"/>
</dbReference>
<dbReference type="GO" id="GO:0006414">
    <property type="term" value="P:translational elongation"/>
    <property type="evidence" value="ECO:0000304"/>
    <property type="project" value="ProtInc"/>
</dbReference>
<dbReference type="CDD" id="cd16967">
    <property type="entry name" value="Alpha_kinase_eEF2K"/>
    <property type="match status" value="1"/>
</dbReference>
<dbReference type="FunFam" id="1.25.40.10:FF:000229">
    <property type="entry name" value="Eukaryotic elongation factor 2 kinase"/>
    <property type="match status" value="1"/>
</dbReference>
<dbReference type="FunFam" id="3.20.200.10:FF:000002">
    <property type="entry name" value="Eukaryotic elongation factor 2 kinase"/>
    <property type="match status" value="1"/>
</dbReference>
<dbReference type="FunFam" id="3.30.200.20:FF:000230">
    <property type="entry name" value="Eukaryotic elongation factor 2 kinase"/>
    <property type="match status" value="1"/>
</dbReference>
<dbReference type="FunFam" id="3.30.200.20:FF:000336">
    <property type="entry name" value="Eukaryotic elongation factor 2 kinase"/>
    <property type="match status" value="1"/>
</dbReference>
<dbReference type="Gene3D" id="3.20.200.10">
    <property type="entry name" value="MHCK/EF2 kinase"/>
    <property type="match status" value="1"/>
</dbReference>
<dbReference type="Gene3D" id="3.30.200.20">
    <property type="entry name" value="Phosphorylase Kinase, domain 1"/>
    <property type="match status" value="2"/>
</dbReference>
<dbReference type="Gene3D" id="1.25.40.10">
    <property type="entry name" value="Tetratricopeptide repeat domain"/>
    <property type="match status" value="1"/>
</dbReference>
<dbReference type="InterPro" id="IPR004166">
    <property type="entry name" value="a-kinase_dom"/>
</dbReference>
<dbReference type="InterPro" id="IPR051852">
    <property type="entry name" value="Alpha-type_PK"/>
</dbReference>
<dbReference type="InterPro" id="IPR017400">
    <property type="entry name" value="eEF-2K"/>
</dbReference>
<dbReference type="InterPro" id="IPR047588">
    <property type="entry name" value="eEF2K_a_kinase_dom"/>
</dbReference>
<dbReference type="InterPro" id="IPR011009">
    <property type="entry name" value="Kinase-like_dom_sf"/>
</dbReference>
<dbReference type="InterPro" id="IPR011990">
    <property type="entry name" value="TPR-like_helical_dom_sf"/>
</dbReference>
<dbReference type="PANTHER" id="PTHR45992:SF2">
    <property type="entry name" value="EUKARYOTIC ELONGATION FACTOR 2 KINASE"/>
    <property type="match status" value="1"/>
</dbReference>
<dbReference type="PANTHER" id="PTHR45992">
    <property type="entry name" value="EUKARYOTIC ELONGATION FACTOR 2 KINASE-RELATED"/>
    <property type="match status" value="1"/>
</dbReference>
<dbReference type="Pfam" id="PF02816">
    <property type="entry name" value="Alpha_kinase"/>
    <property type="match status" value="1"/>
</dbReference>
<dbReference type="PIRSF" id="PIRSF038139">
    <property type="entry name" value="Elongation_factor_2_kinase"/>
    <property type="match status" value="1"/>
</dbReference>
<dbReference type="SMART" id="SM00811">
    <property type="entry name" value="Alpha_kinase"/>
    <property type="match status" value="1"/>
</dbReference>
<dbReference type="SUPFAM" id="SSF81901">
    <property type="entry name" value="HCP-like"/>
    <property type="match status" value="1"/>
</dbReference>
<dbReference type="SUPFAM" id="SSF56112">
    <property type="entry name" value="Protein kinase-like (PK-like)"/>
    <property type="match status" value="1"/>
</dbReference>
<dbReference type="PROSITE" id="PS51158">
    <property type="entry name" value="ALPHA_KINASE"/>
    <property type="match status" value="1"/>
</dbReference>
<accession>O00418</accession>
<accession>Q8N588</accession>
<comment type="function">
    <text evidence="9 15">Threonine kinase that regulates protein synthesis by controlling the rate of peptide chain elongation. Upon activation by a variety of upstream kinases including AMPK or TRPM7, phosphorylates the elongation factor EEF2 at a single site, renders it unable to bind ribosomes and thus inactive. In turn, the rate of protein synthesis is reduced.</text>
</comment>
<comment type="catalytic activity">
    <reaction evidence="6 15">
        <text>[translation elongation factor 2] + ATP = [translation elongation factor 2]-phosphate + ADP + H(+)</text>
        <dbReference type="Rhea" id="RHEA:21436"/>
        <dbReference type="Rhea" id="RHEA-COMP:11268"/>
        <dbReference type="Rhea" id="RHEA-COMP:11269"/>
        <dbReference type="ChEBI" id="CHEBI:15378"/>
        <dbReference type="ChEBI" id="CHEBI:30616"/>
        <dbReference type="ChEBI" id="CHEBI:43176"/>
        <dbReference type="ChEBI" id="CHEBI:68546"/>
        <dbReference type="ChEBI" id="CHEBI:456216"/>
        <dbReference type="EC" id="2.7.11.20"/>
    </reaction>
</comment>
<comment type="activity regulation">
    <text evidence="3">Undergoes calcium/calmodulin-dependent intramolecular autophosphorylation, and this results in it becoming partially calcium/calmodulin-independent.</text>
</comment>
<comment type="biophysicochemical properties">
    <kinetics>
        <KM evidence="6">1.2 uM for EEF2</KM>
        <Vmax evidence="6">4.0 nmol/min/mg enzyme</Vmax>
    </kinetics>
</comment>
<comment type="subunit">
    <text evidence="6 16">Monomer or homodimer (Probable). Interacts with Calmodulin/CALM1; this interaction is strictly required for phosphorylation activity (PubMed:11015200).</text>
</comment>
<comment type="PTM">
    <text evidence="6 7 8 9 12 13 14">Autophosphorylated at multiple residues, Thr-348 being the major site. Phosphorylated by AMP-activated protein kinase AMPK at Ser-398 leading to EEF2K activation and protein synthesis inhibition. Phosphorylated by TRPM7 at Ser-78 resulting in improved protein stability, higher EE2F phosphorylated and subsequently reduced rate of protein synthesis. Phosphorylation by other kinases such as CDK1 and MAPK13 at Ser-359 or RPS6KA1 and RPS6KB1 at Ser-366 instead decrease EEF2K activity and promote protein synthesis.</text>
</comment>
<comment type="similarity">
    <text evidence="16">Belongs to the protein kinase superfamily. Alpha-type protein kinase family.</text>
</comment>
<feature type="initiator methionine" description="Removed" evidence="24">
    <location>
        <position position="1"/>
    </location>
</feature>
<feature type="chain" id="PRO_0000086936" description="Eukaryotic elongation factor 2 kinase">
    <location>
        <begin position="2"/>
        <end position="725"/>
    </location>
</feature>
<feature type="domain" description="Alpha-type protein kinase" evidence="4">
    <location>
        <begin position="116"/>
        <end position="326"/>
    </location>
</feature>
<feature type="region of interest" description="Disordered" evidence="5">
    <location>
        <begin position="1"/>
        <end position="38"/>
    </location>
</feature>
<feature type="region of interest" description="Calmodulin-binding" evidence="6">
    <location>
        <begin position="81"/>
        <end position="94"/>
    </location>
</feature>
<feature type="region of interest" description="Disordered" evidence="5">
    <location>
        <begin position="352"/>
        <end position="405"/>
    </location>
</feature>
<feature type="region of interest" description="Disordered" evidence="5">
    <location>
        <begin position="423"/>
        <end position="477"/>
    </location>
</feature>
<feature type="compositionally biased region" description="Basic and acidic residues" evidence="5">
    <location>
        <begin position="1"/>
        <end position="12"/>
    </location>
</feature>
<feature type="compositionally biased region" description="Acidic residues" evidence="5">
    <location>
        <begin position="27"/>
        <end position="36"/>
    </location>
</feature>
<feature type="compositionally biased region" description="Low complexity" evidence="5">
    <location>
        <begin position="363"/>
        <end position="377"/>
    </location>
</feature>
<feature type="compositionally biased region" description="Polar residues" evidence="5">
    <location>
        <begin position="386"/>
        <end position="404"/>
    </location>
</feature>
<feature type="compositionally biased region" description="Basic and acidic residues" evidence="5">
    <location>
        <begin position="423"/>
        <end position="436"/>
    </location>
</feature>
<feature type="compositionally biased region" description="Basic and acidic residues" evidence="5">
    <location>
        <begin position="445"/>
        <end position="469"/>
    </location>
</feature>
<feature type="binding site" evidence="1">
    <location>
        <begin position="296"/>
        <end position="302"/>
    </location>
    <ligand>
        <name>ATP</name>
        <dbReference type="ChEBI" id="CHEBI:30616"/>
    </ligand>
</feature>
<feature type="modified residue" description="N-acetylalanine" evidence="24">
    <location>
        <position position="2"/>
    </location>
</feature>
<feature type="modified residue" description="Phosphoserine" evidence="17 18 19 21 22 23 25">
    <location>
        <position position="18"/>
    </location>
</feature>
<feature type="modified residue" description="Phosphoserine" evidence="26">
    <location>
        <position position="27"/>
    </location>
</feature>
<feature type="modified residue" description="Phosphoserine; by autocatalysis" evidence="14">
    <location>
        <position position="61"/>
    </location>
</feature>
<feature type="modified residue" description="Phosphoserine; by autocatalysis" evidence="14">
    <location>
        <position position="66"/>
    </location>
</feature>
<feature type="modified residue" description="Phosphoserine" evidence="25">
    <location>
        <position position="70"/>
    </location>
</feature>
<feature type="modified residue" description="Phosphoserine" evidence="2">
    <location>
        <position position="71"/>
    </location>
</feature>
<feature type="modified residue" description="Phosphoserine" evidence="25">
    <location>
        <position position="72"/>
    </location>
</feature>
<feature type="modified residue" description="Phosphoserine" evidence="25">
    <location>
        <position position="74"/>
    </location>
</feature>
<feature type="modified residue" description="Phosphoserine; by autocatalysis and TRPM7" evidence="13 14 25">
    <location>
        <position position="78"/>
    </location>
</feature>
<feature type="modified residue" description="Phosphoserine" evidence="25">
    <location>
        <position position="243"/>
    </location>
</feature>
<feature type="modified residue" description="Phosphothreonine; by autocatalysis" evidence="14 20 22 25 26">
    <location>
        <position position="348"/>
    </location>
</feature>
<feature type="modified residue" description="Phosphothreonine; by autocatalysis" evidence="14 25">
    <location>
        <position position="353"/>
    </location>
</feature>
<feature type="modified residue" description="Phosphoserine; by MAPK13 and CDK1" evidence="7 12">
    <location>
        <position position="359"/>
    </location>
</feature>
<feature type="modified residue" description="Phosphoserine; by autocatalysis, RPS6KA1 and RPS6KB1" evidence="8 14">
    <location>
        <position position="366"/>
    </location>
</feature>
<feature type="modified residue" description="Phosphoserine" evidence="2">
    <location>
        <position position="392"/>
    </location>
</feature>
<feature type="modified residue" description="Phosphoserine; by AMPK" evidence="9">
    <location>
        <position position="398"/>
    </location>
</feature>
<feature type="modified residue" description="Phosphoserine" evidence="25">
    <location>
        <position position="435"/>
    </location>
</feature>
<feature type="modified residue" description="Phosphoserine; by autocatalysis" evidence="14 18 22 25 26">
    <location>
        <position position="445"/>
    </location>
</feature>
<feature type="modified residue" description="Phosphoserine" evidence="20 22 23 25">
    <location>
        <position position="470"/>
    </location>
</feature>
<feature type="modified residue" description="Phosphoserine; by autocatalysis" evidence="14 19 20 22 25 26">
    <location>
        <position position="474"/>
    </location>
</feature>
<feature type="modified residue" description="Phosphoserine" evidence="20 25">
    <location>
        <position position="477"/>
    </location>
</feature>
<feature type="modified residue" description="Phosphoserine; by autocatalysis" evidence="14 25">
    <location>
        <position position="491"/>
    </location>
</feature>
<feature type="modified residue" description="Phosphoserine; by PKA" evidence="3">
    <location>
        <position position="500"/>
    </location>
</feature>
<feature type="sequence variant" id="VAR_033915" description="In dbSNP:rs9935059." evidence="10 11">
    <original>H</original>
    <variation>R</variation>
    <location>
        <position position="23"/>
    </location>
</feature>
<feature type="sequence variant" id="VAR_033916" description="In dbSNP:rs17841292." evidence="11">
    <original>P</original>
    <variation>A</variation>
    <location>
        <position position="75"/>
    </location>
</feature>
<feature type="sequence variant" id="VAR_041534" description="In a colorectal adenocarcinoma sample; somatic mutation; dbSNP:rs147978363." evidence="11">
    <original>T</original>
    <variation>M</variation>
    <location>
        <position position="291"/>
    </location>
</feature>
<feature type="sequence variant" id="VAR_058405" description="In dbSNP:rs4783453." evidence="10 15">
    <original>Q</original>
    <variation>R</variation>
    <location>
        <position position="361"/>
    </location>
</feature>
<feature type="sequence variant" id="VAR_041535" description="In dbSNP:rs56137739." evidence="11">
    <original>R</original>
    <variation>W</variation>
    <location>
        <position position="433"/>
    </location>
</feature>
<feature type="sequence variant" id="VAR_041536" evidence="11">
    <original>D</original>
    <variation>H</variation>
    <location>
        <position position="609"/>
    </location>
</feature>
<feature type="mutagenesis site" description="Decreased kinase activity." evidence="14">
    <original>S</original>
    <variation>A</variation>
    <location>
        <position position="78"/>
    </location>
</feature>
<feature type="mutagenesis site" description="Decreased kinase activity." evidence="14">
    <original>T</original>
    <variation>A</variation>
    <location>
        <position position="348"/>
    </location>
</feature>
<feature type="mutagenesis site" description="Abrogates phosphorylation by RPS6KB1." evidence="8 14">
    <original>S</original>
    <variation>A</variation>
    <location>
        <position position="366"/>
    </location>
</feature>
<feature type="mutagenesis site" description="Decreased kinase activity." evidence="8 14">
    <original>S</original>
    <variation>A</variation>
    <location>
        <position position="366"/>
    </location>
</feature>
<feature type="strand" evidence="27">
    <location>
        <begin position="78"/>
        <end position="80"/>
    </location>
</feature>
<feature type="helix" evidence="32">
    <location>
        <begin position="82"/>
        <end position="94"/>
    </location>
</feature>
<feature type="helix" evidence="32">
    <location>
        <begin position="100"/>
        <end position="102"/>
    </location>
</feature>
<feature type="helix" evidence="32">
    <location>
        <begin position="104"/>
        <end position="106"/>
    </location>
</feature>
<feature type="strand" evidence="32">
    <location>
        <begin position="110"/>
        <end position="118"/>
    </location>
</feature>
<feature type="turn" evidence="32">
    <location>
        <begin position="119"/>
        <end position="122"/>
    </location>
</feature>
<feature type="strand" evidence="32">
    <location>
        <begin position="123"/>
        <end position="133"/>
    </location>
</feature>
<feature type="strand" evidence="32">
    <location>
        <begin position="138"/>
        <end position="140"/>
    </location>
</feature>
<feature type="strand" evidence="32">
    <location>
        <begin position="142"/>
        <end position="151"/>
    </location>
</feature>
<feature type="strand" evidence="32">
    <location>
        <begin position="154"/>
        <end position="158"/>
    </location>
</feature>
<feature type="helix" evidence="32">
    <location>
        <begin position="161"/>
        <end position="163"/>
    </location>
</feature>
<feature type="strand" evidence="32">
    <location>
        <begin position="165"/>
        <end position="174"/>
    </location>
</feature>
<feature type="helix" evidence="32">
    <location>
        <begin position="178"/>
        <end position="199"/>
    </location>
</feature>
<feature type="strand" evidence="32">
    <location>
        <begin position="213"/>
        <end position="216"/>
    </location>
</feature>
<feature type="strand" evidence="29">
    <location>
        <begin position="218"/>
        <end position="220"/>
    </location>
</feature>
<feature type="strand" evidence="32">
    <location>
        <begin position="225"/>
        <end position="230"/>
    </location>
</feature>
<feature type="strand" evidence="32">
    <location>
        <begin position="236"/>
        <end position="238"/>
    </location>
</feature>
<feature type="strand" evidence="32">
    <location>
        <begin position="242"/>
        <end position="244"/>
    </location>
</feature>
<feature type="strand" evidence="29">
    <location>
        <begin position="248"/>
        <end position="250"/>
    </location>
</feature>
<feature type="helix" evidence="32">
    <location>
        <begin position="253"/>
        <end position="265"/>
    </location>
</feature>
<feature type="turn" evidence="32">
    <location>
        <begin position="266"/>
        <end position="268"/>
    </location>
</feature>
<feature type="strand" evidence="32">
    <location>
        <begin position="269"/>
        <end position="273"/>
    </location>
</feature>
<feature type="strand" evidence="32">
    <location>
        <begin position="276"/>
        <end position="278"/>
    </location>
</feature>
<feature type="strand" evidence="32">
    <location>
        <begin position="286"/>
        <end position="291"/>
    </location>
</feature>
<feature type="helix" evidence="31">
    <location>
        <begin position="296"/>
        <end position="298"/>
    </location>
</feature>
<feature type="helix" evidence="32">
    <location>
        <begin position="302"/>
        <end position="311"/>
    </location>
</feature>
<feature type="helix" evidence="32">
    <location>
        <begin position="316"/>
        <end position="320"/>
    </location>
</feature>
<feature type="helix" evidence="32">
    <location>
        <begin position="330"/>
        <end position="337"/>
    </location>
</feature>
<feature type="helix" evidence="30">
    <location>
        <begin position="340"/>
        <end position="344"/>
    </location>
</feature>
<feature type="helix" evidence="33">
    <location>
        <begin position="502"/>
        <end position="508"/>
    </location>
</feature>
<feature type="helix" evidence="32">
    <location>
        <begin position="517"/>
        <end position="536"/>
    </location>
</feature>
<feature type="turn" evidence="32">
    <location>
        <begin position="537"/>
        <end position="539"/>
    </location>
</feature>
<feature type="helix" evidence="32">
    <location>
        <begin position="548"/>
        <end position="560"/>
    </location>
</feature>
<feature type="helix" evidence="32">
    <location>
        <begin position="564"/>
        <end position="574"/>
    </location>
</feature>
<feature type="turn" evidence="32">
    <location>
        <begin position="581"/>
        <end position="584"/>
    </location>
</feature>
<feature type="helix" evidence="32">
    <location>
        <begin position="591"/>
        <end position="606"/>
    </location>
</feature>
<feature type="helix" evidence="32">
    <location>
        <begin position="610"/>
        <end position="622"/>
    </location>
</feature>
<feature type="turn" evidence="28">
    <location>
        <begin position="624"/>
        <end position="626"/>
    </location>
</feature>
<feature type="helix" evidence="32">
    <location>
        <begin position="634"/>
        <end position="645"/>
    </location>
</feature>
<feature type="strand" evidence="28">
    <location>
        <begin position="649"/>
        <end position="653"/>
    </location>
</feature>
<feature type="helix" evidence="32">
    <location>
        <begin position="664"/>
        <end position="677"/>
    </location>
</feature>
<feature type="strand" evidence="28">
    <location>
        <begin position="680"/>
        <end position="682"/>
    </location>
</feature>
<feature type="helix" evidence="32">
    <location>
        <begin position="686"/>
        <end position="702"/>
    </location>
</feature>
<feature type="helix" evidence="32">
    <location>
        <begin position="706"/>
        <end position="720"/>
    </location>
</feature>
<organism>
    <name type="scientific">Homo sapiens</name>
    <name type="common">Human</name>
    <dbReference type="NCBI Taxonomy" id="9606"/>
    <lineage>
        <taxon>Eukaryota</taxon>
        <taxon>Metazoa</taxon>
        <taxon>Chordata</taxon>
        <taxon>Craniata</taxon>
        <taxon>Vertebrata</taxon>
        <taxon>Euteleostomi</taxon>
        <taxon>Mammalia</taxon>
        <taxon>Eutheria</taxon>
        <taxon>Euarchontoglires</taxon>
        <taxon>Primates</taxon>
        <taxon>Haplorrhini</taxon>
        <taxon>Catarrhini</taxon>
        <taxon>Hominidae</taxon>
        <taxon>Homo</taxon>
    </lineage>
</organism>
<reference key="1">
    <citation type="journal article" date="1997" name="Proc. Natl. Acad. Sci. U.S.A.">
        <title>Identification of a new class of protein kinases represented by eukaryotic elongation factor-2 kinase.</title>
        <authorList>
            <person name="Ryazanov A.G."/>
            <person name="Ward M.D."/>
            <person name="Mendola C.E."/>
            <person name="Pavur K.S."/>
            <person name="Dorovkov M.V."/>
            <person name="Wiedmann M."/>
            <person name="Erdjument-Bromage H."/>
            <person name="Tempst P."/>
            <person name="Parmer T.G."/>
            <person name="Prostko C.R."/>
            <person name="Germino F.J."/>
            <person name="Hait W.N."/>
        </authorList>
    </citation>
    <scope>NUCLEOTIDE SEQUENCE [MRNA]</scope>
    <scope>FUNCTION</scope>
    <scope>CATALYTIC ACTIVITY</scope>
    <scope>VARIANT ARG-361</scope>
    <source>
        <tissue>Glial tumor</tissue>
    </source>
</reference>
<reference key="2">
    <citation type="journal article" date="2004" name="Nature">
        <title>The sequence and analysis of duplication-rich human chromosome 16.</title>
        <authorList>
            <person name="Martin J."/>
            <person name="Han C."/>
            <person name="Gordon L.A."/>
            <person name="Terry A."/>
            <person name="Prabhakar S."/>
            <person name="She X."/>
            <person name="Xie G."/>
            <person name="Hellsten U."/>
            <person name="Chan Y.M."/>
            <person name="Altherr M."/>
            <person name="Couronne O."/>
            <person name="Aerts A."/>
            <person name="Bajorek E."/>
            <person name="Black S."/>
            <person name="Blumer H."/>
            <person name="Branscomb E."/>
            <person name="Brown N.C."/>
            <person name="Bruno W.J."/>
            <person name="Buckingham J.M."/>
            <person name="Callen D.F."/>
            <person name="Campbell C.S."/>
            <person name="Campbell M.L."/>
            <person name="Campbell E.W."/>
            <person name="Caoile C."/>
            <person name="Challacombe J.F."/>
            <person name="Chasteen L.A."/>
            <person name="Chertkov O."/>
            <person name="Chi H.C."/>
            <person name="Christensen M."/>
            <person name="Clark L.M."/>
            <person name="Cohn J.D."/>
            <person name="Denys M."/>
            <person name="Detter J.C."/>
            <person name="Dickson M."/>
            <person name="Dimitrijevic-Bussod M."/>
            <person name="Escobar J."/>
            <person name="Fawcett J.J."/>
            <person name="Flowers D."/>
            <person name="Fotopulos D."/>
            <person name="Glavina T."/>
            <person name="Gomez M."/>
            <person name="Gonzales E."/>
            <person name="Goodstein D."/>
            <person name="Goodwin L.A."/>
            <person name="Grady D.L."/>
            <person name="Grigoriev I."/>
            <person name="Groza M."/>
            <person name="Hammon N."/>
            <person name="Hawkins T."/>
            <person name="Haydu L."/>
            <person name="Hildebrand C.E."/>
            <person name="Huang W."/>
            <person name="Israni S."/>
            <person name="Jett J."/>
            <person name="Jewett P.B."/>
            <person name="Kadner K."/>
            <person name="Kimball H."/>
            <person name="Kobayashi A."/>
            <person name="Krawczyk M.-C."/>
            <person name="Leyba T."/>
            <person name="Longmire J.L."/>
            <person name="Lopez F."/>
            <person name="Lou Y."/>
            <person name="Lowry S."/>
            <person name="Ludeman T."/>
            <person name="Manohar C.F."/>
            <person name="Mark G.A."/>
            <person name="McMurray K.L."/>
            <person name="Meincke L.J."/>
            <person name="Morgan J."/>
            <person name="Moyzis R.K."/>
            <person name="Mundt M.O."/>
            <person name="Munk A.C."/>
            <person name="Nandkeshwar R.D."/>
            <person name="Pitluck S."/>
            <person name="Pollard M."/>
            <person name="Predki P."/>
            <person name="Parson-Quintana B."/>
            <person name="Ramirez L."/>
            <person name="Rash S."/>
            <person name="Retterer J."/>
            <person name="Ricke D.O."/>
            <person name="Robinson D.L."/>
            <person name="Rodriguez A."/>
            <person name="Salamov A."/>
            <person name="Saunders E.H."/>
            <person name="Scott D."/>
            <person name="Shough T."/>
            <person name="Stallings R.L."/>
            <person name="Stalvey M."/>
            <person name="Sutherland R.D."/>
            <person name="Tapia R."/>
            <person name="Tesmer J.G."/>
            <person name="Thayer N."/>
            <person name="Thompson L.S."/>
            <person name="Tice H."/>
            <person name="Torney D.C."/>
            <person name="Tran-Gyamfi M."/>
            <person name="Tsai M."/>
            <person name="Ulanovsky L.E."/>
            <person name="Ustaszewska A."/>
            <person name="Vo N."/>
            <person name="White P.S."/>
            <person name="Williams A.L."/>
            <person name="Wills P.L."/>
            <person name="Wu J.-R."/>
            <person name="Wu K."/>
            <person name="Yang J."/>
            <person name="DeJong P."/>
            <person name="Bruce D."/>
            <person name="Doggett N.A."/>
            <person name="Deaven L."/>
            <person name="Schmutz J."/>
            <person name="Grimwood J."/>
            <person name="Richardson P."/>
            <person name="Rokhsar D.S."/>
            <person name="Eichler E.E."/>
            <person name="Gilna P."/>
            <person name="Lucas S.M."/>
            <person name="Myers R.M."/>
            <person name="Rubin E.M."/>
            <person name="Pennacchio L.A."/>
        </authorList>
    </citation>
    <scope>NUCLEOTIDE SEQUENCE [LARGE SCALE GENOMIC DNA]</scope>
</reference>
<reference key="3">
    <citation type="journal article" date="2004" name="Genome Res.">
        <title>The status, quality, and expansion of the NIH full-length cDNA project: the Mammalian Gene Collection (MGC).</title>
        <authorList>
            <consortium name="The MGC Project Team"/>
        </authorList>
    </citation>
    <scope>NUCLEOTIDE SEQUENCE [LARGE SCALE MRNA]</scope>
    <scope>VARIANTS ARG-23 AND ARG-361</scope>
    <source>
        <tissue>Lymph</tissue>
    </source>
</reference>
<reference key="4">
    <citation type="journal article" date="2000" name="Biochemistry">
        <title>Mapping the functional domains of elongation factor-2 kinase.</title>
        <authorList>
            <person name="Pavur K.S."/>
            <person name="Petrov A.N."/>
            <person name="Ryazanov A.G."/>
        </authorList>
    </citation>
    <scope>CATALYTIC ACTIVITY</scope>
    <scope>IDENTIFICATION OF THE CALMODULIN-BINDING REGION</scope>
    <scope>AUTOPHOSPHORYLATION</scope>
    <scope>BIOPHYSICOCHEMICAL PROPERTIES</scope>
</reference>
<reference key="5">
    <citation type="journal article" date="2001" name="EMBO J.">
        <title>A novel method to identify protein kinase substrates: eEF2 kinase is phosphorylated and inhibited by SAPK4/p38delta.</title>
        <authorList>
            <person name="Knebel A."/>
            <person name="Morrice N."/>
            <person name="Cohen P."/>
        </authorList>
    </citation>
    <scope>PHOSPHORYLATION AT SER-359</scope>
</reference>
<reference key="6">
    <citation type="journal article" date="2001" name="EMBO J.">
        <title>Regulation of elongation factor 2 kinase by p90(RSK1) and p70 S6 kinase.</title>
        <authorList>
            <person name="Wang X."/>
            <person name="Li W."/>
            <person name="Williams M."/>
            <person name="Terada N."/>
            <person name="Alessi D.R."/>
            <person name="Proud C.G."/>
        </authorList>
    </citation>
    <scope>PHOSPHORYLATION AT SER-366 BY RPS6KA1 AND RPS6KB1</scope>
    <scope>MUTAGENESIS OF SER-366</scope>
</reference>
<reference key="7">
    <citation type="journal article" date="2004" name="Anal. Chem.">
        <title>Robust phosphoproteomic profiling of tyrosine phosphorylation sites from human T cells using immobilized metal affinity chromatography and tandem mass spectrometry.</title>
        <authorList>
            <person name="Brill L.M."/>
            <person name="Salomon A.R."/>
            <person name="Ficarro S.B."/>
            <person name="Mukherji M."/>
            <person name="Stettler-Gill M."/>
            <person name="Peters E.C."/>
        </authorList>
    </citation>
    <scope>PHOSPHORYLATION [LARGE SCALE ANALYSIS] AT SER-18</scope>
    <scope>IDENTIFICATION BY MASS SPECTROMETRY [LARGE SCALE ANALYSIS]</scope>
    <source>
        <tissue>Leukemic T-cell</tissue>
    </source>
</reference>
<reference key="8">
    <citation type="journal article" date="2004" name="J. Biol. Chem.">
        <title>Stimulation of the AMP-activated protein kinase leads to activation of eukaryotic elongation factor 2 kinase and to its phosphorylation at a novel site, serine 398.</title>
        <authorList>
            <person name="Browne G.J."/>
            <person name="Finn S.G."/>
            <person name="Proud C.G."/>
        </authorList>
    </citation>
    <scope>FUNCTION</scope>
    <scope>PHOSPHORYLATION AT SER-398</scope>
</reference>
<reference key="9">
    <citation type="journal article" date="2006" name="Cell">
        <title>Global, in vivo, and site-specific phosphorylation dynamics in signaling networks.</title>
        <authorList>
            <person name="Olsen J.V."/>
            <person name="Blagoev B."/>
            <person name="Gnad F."/>
            <person name="Macek B."/>
            <person name="Kumar C."/>
            <person name="Mortensen P."/>
            <person name="Mann M."/>
        </authorList>
    </citation>
    <scope>PHOSPHORYLATION [LARGE SCALE ANALYSIS] AT SER-18 AND SER-474</scope>
    <scope>IDENTIFICATION BY MASS SPECTROMETRY [LARGE SCALE ANALYSIS]</scope>
    <source>
        <tissue>Cervix carcinoma</tissue>
    </source>
</reference>
<reference key="10">
    <citation type="journal article" date="2006" name="Nat. Biotechnol.">
        <title>A probability-based approach for high-throughput protein phosphorylation analysis and site localization.</title>
        <authorList>
            <person name="Beausoleil S.A."/>
            <person name="Villen J."/>
            <person name="Gerber S.A."/>
            <person name="Rush J."/>
            <person name="Gygi S.P."/>
        </authorList>
    </citation>
    <scope>PHOSPHORYLATION [LARGE SCALE ANALYSIS] AT SER-18 AND SER-445</scope>
    <scope>IDENTIFICATION BY MASS SPECTROMETRY [LARGE SCALE ANALYSIS]</scope>
    <source>
        <tissue>Cervix carcinoma</tissue>
    </source>
</reference>
<reference key="11">
    <citation type="journal article" date="2008" name="EMBO J.">
        <title>cdc2-cyclin B regulates eEF2 kinase activity in a cell cycle- and amino acid-dependent manner.</title>
        <authorList>
            <person name="Smith E.M."/>
            <person name="Proud C.G."/>
        </authorList>
    </citation>
    <scope>PHOSPHORYLATION AT SER-359</scope>
</reference>
<reference key="12">
    <citation type="journal article" date="2008" name="Proc. Natl. Acad. Sci. U.S.A.">
        <title>A quantitative atlas of mitotic phosphorylation.</title>
        <authorList>
            <person name="Dephoure N."/>
            <person name="Zhou C."/>
            <person name="Villen J."/>
            <person name="Beausoleil S.A."/>
            <person name="Bakalarski C.E."/>
            <person name="Elledge S.J."/>
            <person name="Gygi S.P."/>
        </authorList>
    </citation>
    <scope>PHOSPHORYLATION [LARGE SCALE ANALYSIS] AT THR-348; SER-470; SER-474 AND SER-477</scope>
    <scope>IDENTIFICATION BY MASS SPECTROMETRY [LARGE SCALE ANALYSIS]</scope>
    <source>
        <tissue>Cervix carcinoma</tissue>
    </source>
</reference>
<reference key="13">
    <citation type="journal article" date="2009" name="Anal. Chem.">
        <title>Lys-N and trypsin cover complementary parts of the phosphoproteome in a refined SCX-based approach.</title>
        <authorList>
            <person name="Gauci S."/>
            <person name="Helbig A.O."/>
            <person name="Slijper M."/>
            <person name="Krijgsveld J."/>
            <person name="Heck A.J."/>
            <person name="Mohammed S."/>
        </authorList>
    </citation>
    <scope>IDENTIFICATION BY MASS SPECTROMETRY [LARGE SCALE ANALYSIS]</scope>
</reference>
<reference key="14">
    <citation type="journal article" date="2009" name="Sci. Signal.">
        <title>Quantitative phosphoproteomic analysis of T cell receptor signaling reveals system-wide modulation of protein-protein interactions.</title>
        <authorList>
            <person name="Mayya V."/>
            <person name="Lundgren D.H."/>
            <person name="Hwang S.-I."/>
            <person name="Rezaul K."/>
            <person name="Wu L."/>
            <person name="Eng J.K."/>
            <person name="Rodionov V."/>
            <person name="Han D.K."/>
        </authorList>
    </citation>
    <scope>PHOSPHORYLATION [LARGE SCALE ANALYSIS] AT SER-18</scope>
    <scope>IDENTIFICATION BY MASS SPECTROMETRY [LARGE SCALE ANALYSIS]</scope>
    <source>
        <tissue>Leukemic T-cell</tissue>
    </source>
</reference>
<reference key="15">
    <citation type="journal article" date="2010" name="Sci. Signal.">
        <title>Quantitative phosphoproteomics reveals widespread full phosphorylation site occupancy during mitosis.</title>
        <authorList>
            <person name="Olsen J.V."/>
            <person name="Vermeulen M."/>
            <person name="Santamaria A."/>
            <person name="Kumar C."/>
            <person name="Miller M.L."/>
            <person name="Jensen L.J."/>
            <person name="Gnad F."/>
            <person name="Cox J."/>
            <person name="Jensen T.S."/>
            <person name="Nigg E.A."/>
            <person name="Brunak S."/>
            <person name="Mann M."/>
        </authorList>
    </citation>
    <scope>PHOSPHORYLATION [LARGE SCALE ANALYSIS] AT SER-18; THR-348; SER-445; SER-470 AND SER-474</scope>
    <scope>IDENTIFICATION BY MASS SPECTROMETRY [LARGE SCALE ANALYSIS]</scope>
    <source>
        <tissue>Cervix carcinoma</tissue>
    </source>
</reference>
<reference key="16">
    <citation type="journal article" date="2011" name="BMC Syst. Biol.">
        <title>Initial characterization of the human central proteome.</title>
        <authorList>
            <person name="Burkard T.R."/>
            <person name="Planyavsky M."/>
            <person name="Kaupe I."/>
            <person name="Breitwieser F.P."/>
            <person name="Buerckstuemmer T."/>
            <person name="Bennett K.L."/>
            <person name="Superti-Furga G."/>
            <person name="Colinge J."/>
        </authorList>
    </citation>
    <scope>IDENTIFICATION BY MASS SPECTROMETRY [LARGE SCALE ANALYSIS]</scope>
</reference>
<reference key="17">
    <citation type="journal article" date="2011" name="Cell. Signal.">
        <title>The channel-kinase TRPM7 regulates phosphorylation of the translational factor eEF2 via eEF2-k.</title>
        <authorList>
            <person name="Perraud A.L."/>
            <person name="Zhao X."/>
            <person name="Ryazanov A.G."/>
            <person name="Schmitz C."/>
        </authorList>
    </citation>
    <scope>PHOSPHORYLATION AT SER-78</scope>
</reference>
<reference key="18">
    <citation type="journal article" date="2011" name="Sci. Signal.">
        <title>System-wide temporal characterization of the proteome and phosphoproteome of human embryonic stem cell differentiation.</title>
        <authorList>
            <person name="Rigbolt K.T."/>
            <person name="Prokhorova T.A."/>
            <person name="Akimov V."/>
            <person name="Henningsen J."/>
            <person name="Johansen P.T."/>
            <person name="Kratchmarova I."/>
            <person name="Kassem M."/>
            <person name="Mann M."/>
            <person name="Olsen J.V."/>
            <person name="Blagoev B."/>
        </authorList>
    </citation>
    <scope>PHOSPHORYLATION [LARGE SCALE ANALYSIS] AT SER-18 AND SER-470</scope>
    <scope>IDENTIFICATION BY MASS SPECTROMETRY [LARGE SCALE ANALYSIS]</scope>
</reference>
<reference key="19">
    <citation type="journal article" date="2012" name="Biochem. J.">
        <title>Identification of autophosphorylation sites in eukaryotic elongation factor-2 kinase.</title>
        <authorList>
            <person name="Pyr Dit Ruys S."/>
            <person name="Wang X."/>
            <person name="Smith E.M."/>
            <person name="Herinckx G."/>
            <person name="Hussain N."/>
            <person name="Rider M.H."/>
            <person name="Vertommen D."/>
            <person name="Proud C.G."/>
        </authorList>
    </citation>
    <scope>PHOSPHORYLATION AT SER-61; SER-66; SER-78; THR-348; THR-353; SER-366; SER-445; SER-474 AND SER-491</scope>
    <scope>MUTAGENESIS OF SER-78; THR-348 AND SER-366</scope>
</reference>
<reference key="20">
    <citation type="journal article" date="2012" name="Mol. Cell. Proteomics">
        <title>Comparative large-scale characterisation of plant vs. mammal proteins reveals similar and idiosyncratic N-alpha acetylation features.</title>
        <authorList>
            <person name="Bienvenut W.V."/>
            <person name="Sumpton D."/>
            <person name="Martinez A."/>
            <person name="Lilla S."/>
            <person name="Espagne C."/>
            <person name="Meinnel T."/>
            <person name="Giglione C."/>
        </authorList>
    </citation>
    <scope>ACETYLATION [LARGE SCALE ANALYSIS] AT ALA-2</scope>
    <scope>CLEAVAGE OF INITIATOR METHIONINE [LARGE SCALE ANALYSIS]</scope>
    <scope>IDENTIFICATION BY MASS SPECTROMETRY [LARGE SCALE ANALYSIS]</scope>
</reference>
<reference key="21">
    <citation type="journal article" date="2013" name="J. Proteome Res.">
        <title>Toward a comprehensive characterization of a human cancer cell phosphoproteome.</title>
        <authorList>
            <person name="Zhou H."/>
            <person name="Di Palma S."/>
            <person name="Preisinger C."/>
            <person name="Peng M."/>
            <person name="Polat A.N."/>
            <person name="Heck A.J."/>
            <person name="Mohammed S."/>
        </authorList>
    </citation>
    <scope>PHOSPHORYLATION [LARGE SCALE ANALYSIS] AT SER-18; SER-70; SER-72; SER-74; SER-78; SER-243; THR-348; THR-353; SER-435; SER-445; SER-470; SER-474; SER-477 AND SER-491</scope>
    <scope>IDENTIFICATION BY MASS SPECTROMETRY [LARGE SCALE ANALYSIS]</scope>
    <source>
        <tissue>Cervix carcinoma</tissue>
        <tissue>Erythroleukemia</tissue>
    </source>
</reference>
<reference key="22">
    <citation type="journal article" date="2014" name="J. Proteomics">
        <title>An enzyme assisted RP-RPLC approach for in-depth analysis of human liver phosphoproteome.</title>
        <authorList>
            <person name="Bian Y."/>
            <person name="Song C."/>
            <person name="Cheng K."/>
            <person name="Dong M."/>
            <person name="Wang F."/>
            <person name="Huang J."/>
            <person name="Sun D."/>
            <person name="Wang L."/>
            <person name="Ye M."/>
            <person name="Zou H."/>
        </authorList>
    </citation>
    <scope>PHOSPHORYLATION [LARGE SCALE ANALYSIS] AT SER-27; THR-348; SER-445 AND SER-474</scope>
    <scope>IDENTIFICATION BY MASS SPECTROMETRY [LARGE SCALE ANALYSIS]</scope>
    <source>
        <tissue>Liver</tissue>
    </source>
</reference>
<reference key="23">
    <citation type="journal article" date="2007" name="Nature">
        <title>Patterns of somatic mutation in human cancer genomes.</title>
        <authorList>
            <person name="Greenman C."/>
            <person name="Stephens P."/>
            <person name="Smith R."/>
            <person name="Dalgliesh G.L."/>
            <person name="Hunter C."/>
            <person name="Bignell G."/>
            <person name="Davies H."/>
            <person name="Teague J."/>
            <person name="Butler A."/>
            <person name="Stevens C."/>
            <person name="Edkins S."/>
            <person name="O'Meara S."/>
            <person name="Vastrik I."/>
            <person name="Schmidt E.E."/>
            <person name="Avis T."/>
            <person name="Barthorpe S."/>
            <person name="Bhamra G."/>
            <person name="Buck G."/>
            <person name="Choudhury B."/>
            <person name="Clements J."/>
            <person name="Cole J."/>
            <person name="Dicks E."/>
            <person name="Forbes S."/>
            <person name="Gray K."/>
            <person name="Halliday K."/>
            <person name="Harrison R."/>
            <person name="Hills K."/>
            <person name="Hinton J."/>
            <person name="Jenkinson A."/>
            <person name="Jones D."/>
            <person name="Menzies A."/>
            <person name="Mironenko T."/>
            <person name="Perry J."/>
            <person name="Raine K."/>
            <person name="Richardson D."/>
            <person name="Shepherd R."/>
            <person name="Small A."/>
            <person name="Tofts C."/>
            <person name="Varian J."/>
            <person name="Webb T."/>
            <person name="West S."/>
            <person name="Widaa S."/>
            <person name="Yates A."/>
            <person name="Cahill D.P."/>
            <person name="Louis D.N."/>
            <person name="Goldstraw P."/>
            <person name="Nicholson A.G."/>
            <person name="Brasseur F."/>
            <person name="Looijenga L."/>
            <person name="Weber B.L."/>
            <person name="Chiew Y.-E."/>
            <person name="DeFazio A."/>
            <person name="Greaves M.F."/>
            <person name="Green A.R."/>
            <person name="Campbell P."/>
            <person name="Birney E."/>
            <person name="Easton D.F."/>
            <person name="Chenevix-Trench G."/>
            <person name="Tan M.-H."/>
            <person name="Khoo S.K."/>
            <person name="Teh B.T."/>
            <person name="Yuen S.T."/>
            <person name="Leung S.Y."/>
            <person name="Wooster R."/>
            <person name="Futreal P.A."/>
            <person name="Stratton M.R."/>
        </authorList>
    </citation>
    <scope>VARIANTS [LARGE SCALE ANALYSIS] ARG-23; ALA-75; MET-291; TRP-433 AND HIS-609</scope>
</reference>
<gene>
    <name type="primary">EEF2K</name>
</gene>
<name>EF2K_HUMAN</name>